<sequence length="332" mass="37340">MSPTSDFVNTTSTAKGHEIIAGLTAKPVEGSTITLCKDIIREFFDKVQVPSPNFTRDPELEARVADIVRTWGNEEHLRPYVVTSLILTVTAYSHIANFETRVQITLFTIIIIAMDDPVVFDSLATREFHQRMCTGVIQDEAGMLGAFTKILESMWDHYSGFSANTIYASALRFVNASIIENETDVTTLRSHALPFVEYKRSMTATTEAYACFIWDKARFPDVKVYMQAIPDAMLYVSYVNDILSFYKEELAGETANYIHERAYVTGKSIPDTLRNLINETASAVERVRDILGEGEARAAFENFAAGYIRVHTGNPRYHLKDVIGGDYIIDRV</sequence>
<keyword id="KW-0456">Lyase</keyword>
<keyword id="KW-0460">Magnesium</keyword>
<keyword id="KW-0479">Metal-binding</keyword>
<dbReference type="EC" id="4.2.3.-" evidence="3"/>
<dbReference type="EMBL" id="LC378439">
    <property type="protein sequence ID" value="BBD74531.1"/>
    <property type="molecule type" value="mRNA"/>
</dbReference>
<dbReference type="SMR" id="A0A348B793"/>
<dbReference type="GO" id="GO:0016838">
    <property type="term" value="F:carbon-oxygen lyase activity, acting on phosphates"/>
    <property type="evidence" value="ECO:0007669"/>
    <property type="project" value="InterPro"/>
</dbReference>
<dbReference type="GO" id="GO:0046872">
    <property type="term" value="F:metal ion binding"/>
    <property type="evidence" value="ECO:0007669"/>
    <property type="project" value="UniProtKB-KW"/>
</dbReference>
<dbReference type="Gene3D" id="1.10.600.10">
    <property type="entry name" value="Farnesyl Diphosphate Synthase"/>
    <property type="match status" value="1"/>
</dbReference>
<dbReference type="InterPro" id="IPR008949">
    <property type="entry name" value="Isoprenoid_synthase_dom_sf"/>
</dbReference>
<dbReference type="InterPro" id="IPR024652">
    <property type="entry name" value="Trichodiene_synth"/>
</dbReference>
<dbReference type="Pfam" id="PF06330">
    <property type="entry name" value="TRI5"/>
    <property type="match status" value="1"/>
</dbReference>
<dbReference type="SFLD" id="SFLDS00005">
    <property type="entry name" value="Isoprenoid_Synthase_Type_I"/>
    <property type="match status" value="1"/>
</dbReference>
<dbReference type="SFLD" id="SFLDG01021">
    <property type="entry name" value="Trichodiene_Synthase_Like"/>
    <property type="match status" value="1"/>
</dbReference>
<dbReference type="SUPFAM" id="SSF48576">
    <property type="entry name" value="Terpenoid synthases"/>
    <property type="match status" value="1"/>
</dbReference>
<proteinExistence type="evidence at protein level"/>
<name>STS25_POSPM</name>
<comment type="function">
    <text evidence="3">Terpene cyclase that catalyzes the cyclization of geranyl diphosphate (GPP) to myrcene and linalool.</text>
</comment>
<comment type="cofactor">
    <cofactor evidence="1">
        <name>Mg(2+)</name>
        <dbReference type="ChEBI" id="CHEBI:18420"/>
    </cofactor>
</comment>
<comment type="domain">
    <text evidence="6">The conserved DDXXXXD and NSE/DTE motifs are important for the catalytic activity, presumably through binding to Mg(2+).</text>
</comment>
<comment type="similarity">
    <text evidence="5">Belongs to the trichodiene synthase family.</text>
</comment>
<organism>
    <name type="scientific">Postia placenta (strain ATCC 44394 / Madison 698-R)</name>
    <name type="common">Brown rot fungus</name>
    <name type="synonym">Poria monticola</name>
    <dbReference type="NCBI Taxonomy" id="561896"/>
    <lineage>
        <taxon>Eukaryota</taxon>
        <taxon>Fungi</taxon>
        <taxon>Dikarya</taxon>
        <taxon>Basidiomycota</taxon>
        <taxon>Agaricomycotina</taxon>
        <taxon>Agaricomycetes</taxon>
        <taxon>Polyporales</taxon>
        <taxon>Adustoporiaceae</taxon>
        <taxon>Rhodonia</taxon>
    </lineage>
</organism>
<gene>
    <name evidence="4" type="primary">STS-25</name>
</gene>
<feature type="chain" id="PRO_0000451375" description="Monoterpene synthase 25">
    <location>
        <begin position="1"/>
        <end position="332"/>
    </location>
</feature>
<feature type="short sequence motif" description="DDXXXXD motif" evidence="6">
    <location>
        <begin position="115"/>
        <end position="121"/>
    </location>
</feature>
<feature type="short sequence motif" description="NSE/DTE motif" evidence="6">
    <location>
        <begin position="240"/>
        <end position="248"/>
    </location>
</feature>
<feature type="binding site" evidence="2">
    <location>
        <position position="115"/>
    </location>
    <ligand>
        <name>Mg(2+)</name>
        <dbReference type="ChEBI" id="CHEBI:18420"/>
        <label>1</label>
    </ligand>
</feature>
<feature type="binding site" evidence="2">
    <location>
        <position position="180"/>
    </location>
    <ligand>
        <name>Mg(2+)</name>
        <dbReference type="ChEBI" id="CHEBI:18420"/>
        <label>1</label>
    </ligand>
</feature>
<feature type="binding site" evidence="2">
    <location>
        <position position="240"/>
    </location>
    <ligand>
        <name>Mg(2+)</name>
        <dbReference type="ChEBI" id="CHEBI:18420"/>
        <label>2</label>
    </ligand>
</feature>
<feature type="binding site" evidence="2">
    <location>
        <position position="244"/>
    </location>
    <ligand>
        <name>Mg(2+)</name>
        <dbReference type="ChEBI" id="CHEBI:18420"/>
        <label>2</label>
    </ligand>
</feature>
<feature type="binding site" evidence="2">
    <location>
        <position position="248"/>
    </location>
    <ligand>
        <name>Mg(2+)</name>
        <dbReference type="ChEBI" id="CHEBI:18420"/>
        <label>2</label>
    </ligand>
</feature>
<reference key="1">
    <citation type="journal article" date="2018" name="Microb. Biotechnol.">
        <title>Insight into metabolic diversity of the brown-rot basidiomycete Postia placenta responsible for sesquiterpene biosynthesis: semi-comprehensive screening of cytochrome P450 monooxygenase involved in protoilludene metabolism.</title>
        <authorList>
            <person name="Ichinose H."/>
            <person name="Kitaoka T."/>
        </authorList>
    </citation>
    <scope>NUCLEOTIDE SEQUENCE [MRNA]</scope>
    <scope>FUNCTION</scope>
    <scope>DOMAIN</scope>
    <scope>CATALYTIC ACTIVITY</scope>
    <source>
        <strain>ATCC 44394 / Madison 698-R</strain>
    </source>
</reference>
<protein>
    <recommendedName>
        <fullName evidence="4">Monoterpene synthase 25</fullName>
        <ecNumber evidence="3">4.2.3.-</ecNumber>
    </recommendedName>
    <alternativeName>
        <fullName evidence="4">Terpene cyclase 25</fullName>
    </alternativeName>
</protein>
<accession>A0A348B793</accession>
<evidence type="ECO:0000250" key="1">
    <source>
        <dbReference type="UniProtKB" id="I3ZNU9"/>
    </source>
</evidence>
<evidence type="ECO:0000250" key="2">
    <source>
        <dbReference type="UniProtKB" id="P13513"/>
    </source>
</evidence>
<evidence type="ECO:0000269" key="3">
    <source>
    </source>
</evidence>
<evidence type="ECO:0000303" key="4">
    <source>
    </source>
</evidence>
<evidence type="ECO:0000305" key="5"/>
<evidence type="ECO:0000305" key="6">
    <source>
    </source>
</evidence>